<sequence>MFGKGGMGNLMKQAQQMQDKMAKVQEEIARMEVTGEAGAGLVKVTMTGSHSVRKVDIDPSLLEDDKEMLEDLIAAACNDAARRVEENQKERMAEVTGGMQLPPGMKMPF</sequence>
<proteinExistence type="inferred from homology"/>
<accession>A8FX85</accession>
<feature type="chain" id="PRO_1000078774" description="Nucleoid-associated protein Ssed_2851">
    <location>
        <begin position="1"/>
        <end position="109"/>
    </location>
</feature>
<reference key="1">
    <citation type="submission" date="2007-08" db="EMBL/GenBank/DDBJ databases">
        <title>Complete sequence of Shewanella sediminis HAW-EB3.</title>
        <authorList>
            <consortium name="US DOE Joint Genome Institute"/>
            <person name="Copeland A."/>
            <person name="Lucas S."/>
            <person name="Lapidus A."/>
            <person name="Barry K."/>
            <person name="Glavina del Rio T."/>
            <person name="Dalin E."/>
            <person name="Tice H."/>
            <person name="Pitluck S."/>
            <person name="Chertkov O."/>
            <person name="Brettin T."/>
            <person name="Bruce D."/>
            <person name="Detter J.C."/>
            <person name="Han C."/>
            <person name="Schmutz J."/>
            <person name="Larimer F."/>
            <person name="Land M."/>
            <person name="Hauser L."/>
            <person name="Kyrpides N."/>
            <person name="Kim E."/>
            <person name="Zhao J.-S."/>
            <person name="Richardson P."/>
        </authorList>
    </citation>
    <scope>NUCLEOTIDE SEQUENCE [LARGE SCALE GENOMIC DNA]</scope>
    <source>
        <strain>HAW-EB3</strain>
    </source>
</reference>
<comment type="function">
    <text evidence="1">Binds to DNA and alters its conformation. May be involved in regulation of gene expression, nucleoid organization and DNA protection.</text>
</comment>
<comment type="subunit">
    <text evidence="1">Homodimer.</text>
</comment>
<comment type="subcellular location">
    <subcellularLocation>
        <location evidence="1">Cytoplasm</location>
        <location evidence="1">Nucleoid</location>
    </subcellularLocation>
</comment>
<comment type="similarity">
    <text evidence="1">Belongs to the YbaB/EbfC family.</text>
</comment>
<gene>
    <name type="ordered locus">Ssed_2851</name>
</gene>
<evidence type="ECO:0000255" key="1">
    <source>
        <dbReference type="HAMAP-Rule" id="MF_00274"/>
    </source>
</evidence>
<keyword id="KW-0963">Cytoplasm</keyword>
<keyword id="KW-0238">DNA-binding</keyword>
<keyword id="KW-1185">Reference proteome</keyword>
<organism>
    <name type="scientific">Shewanella sediminis (strain HAW-EB3)</name>
    <dbReference type="NCBI Taxonomy" id="425104"/>
    <lineage>
        <taxon>Bacteria</taxon>
        <taxon>Pseudomonadati</taxon>
        <taxon>Pseudomonadota</taxon>
        <taxon>Gammaproteobacteria</taxon>
        <taxon>Alteromonadales</taxon>
        <taxon>Shewanellaceae</taxon>
        <taxon>Shewanella</taxon>
    </lineage>
</organism>
<dbReference type="EMBL" id="CP000821">
    <property type="protein sequence ID" value="ABV37458.1"/>
    <property type="molecule type" value="Genomic_DNA"/>
</dbReference>
<dbReference type="RefSeq" id="WP_012143188.1">
    <property type="nucleotide sequence ID" value="NC_009831.1"/>
</dbReference>
<dbReference type="SMR" id="A8FX85"/>
<dbReference type="STRING" id="425104.Ssed_2851"/>
<dbReference type="KEGG" id="sse:Ssed_2851"/>
<dbReference type="eggNOG" id="COG0718">
    <property type="taxonomic scope" value="Bacteria"/>
</dbReference>
<dbReference type="HOGENOM" id="CLU_140930_0_0_6"/>
<dbReference type="OrthoDB" id="9808738at2"/>
<dbReference type="Proteomes" id="UP000002015">
    <property type="component" value="Chromosome"/>
</dbReference>
<dbReference type="GO" id="GO:0043590">
    <property type="term" value="C:bacterial nucleoid"/>
    <property type="evidence" value="ECO:0007669"/>
    <property type="project" value="UniProtKB-UniRule"/>
</dbReference>
<dbReference type="GO" id="GO:0005829">
    <property type="term" value="C:cytosol"/>
    <property type="evidence" value="ECO:0007669"/>
    <property type="project" value="TreeGrafter"/>
</dbReference>
<dbReference type="GO" id="GO:0003677">
    <property type="term" value="F:DNA binding"/>
    <property type="evidence" value="ECO:0007669"/>
    <property type="project" value="UniProtKB-UniRule"/>
</dbReference>
<dbReference type="FunFam" id="3.30.1310.10:FF:000001">
    <property type="entry name" value="Nucleoid-associated protein YbaB"/>
    <property type="match status" value="1"/>
</dbReference>
<dbReference type="Gene3D" id="3.30.1310.10">
    <property type="entry name" value="Nucleoid-associated protein YbaB-like domain"/>
    <property type="match status" value="1"/>
</dbReference>
<dbReference type="HAMAP" id="MF_00274">
    <property type="entry name" value="DNA_YbaB_EbfC"/>
    <property type="match status" value="1"/>
</dbReference>
<dbReference type="InterPro" id="IPR036894">
    <property type="entry name" value="YbaB-like_sf"/>
</dbReference>
<dbReference type="InterPro" id="IPR004401">
    <property type="entry name" value="YbaB/EbfC"/>
</dbReference>
<dbReference type="NCBIfam" id="TIGR00103">
    <property type="entry name" value="DNA_YbaB_EbfC"/>
    <property type="match status" value="1"/>
</dbReference>
<dbReference type="PANTHER" id="PTHR33449">
    <property type="entry name" value="NUCLEOID-ASSOCIATED PROTEIN YBAB"/>
    <property type="match status" value="1"/>
</dbReference>
<dbReference type="PANTHER" id="PTHR33449:SF1">
    <property type="entry name" value="NUCLEOID-ASSOCIATED PROTEIN YBAB"/>
    <property type="match status" value="1"/>
</dbReference>
<dbReference type="Pfam" id="PF02575">
    <property type="entry name" value="YbaB_DNA_bd"/>
    <property type="match status" value="1"/>
</dbReference>
<dbReference type="PIRSF" id="PIRSF004555">
    <property type="entry name" value="UCP004555"/>
    <property type="match status" value="1"/>
</dbReference>
<dbReference type="SUPFAM" id="SSF82607">
    <property type="entry name" value="YbaB-like"/>
    <property type="match status" value="1"/>
</dbReference>
<name>Y2851_SHESH</name>
<protein>
    <recommendedName>
        <fullName evidence="1">Nucleoid-associated protein Ssed_2851</fullName>
    </recommendedName>
</protein>